<accession>P72656</accession>
<evidence type="ECO:0000250" key="1">
    <source>
        <dbReference type="UniProtKB" id="P21513"/>
    </source>
</evidence>
<evidence type="ECO:0000255" key="2">
    <source>
        <dbReference type="PROSITE-ProRule" id="PRU00180"/>
    </source>
</evidence>
<evidence type="ECO:0000256" key="3">
    <source>
        <dbReference type="SAM" id="MobiDB-lite"/>
    </source>
</evidence>
<evidence type="ECO:0000269" key="4">
    <source>
    </source>
</evidence>
<evidence type="ECO:0000269" key="5">
    <source>
    </source>
</evidence>
<evidence type="ECO:0000269" key="6">
    <source>
    </source>
</evidence>
<evidence type="ECO:0000269" key="7">
    <source>
    </source>
</evidence>
<evidence type="ECO:0000269" key="8">
    <source>
    </source>
</evidence>
<evidence type="ECO:0000269" key="9">
    <source>
    </source>
</evidence>
<evidence type="ECO:0000269" key="10">
    <source>
    </source>
</evidence>
<evidence type="ECO:0000269" key="11">
    <source>
    </source>
</evidence>
<evidence type="ECO:0000269" key="12">
    <source>
    </source>
</evidence>
<evidence type="ECO:0000269" key="13">
    <source>
    </source>
</evidence>
<evidence type="ECO:0000303" key="14">
    <source>
    </source>
</evidence>
<evidence type="ECO:0000303" key="15">
    <source>
    </source>
</evidence>
<evidence type="ECO:0000305" key="16"/>
<evidence type="ECO:0000305" key="17">
    <source>
    </source>
</evidence>
<evidence type="ECO:0000305" key="18">
    <source>
    </source>
</evidence>
<evidence type="ECO:0000305" key="19">
    <source>
    </source>
</evidence>
<evidence type="ECO:0000305" key="20">
    <source>
    </source>
</evidence>
<protein>
    <recommendedName>
        <fullName evidence="15">Ribonuclease E</fullName>
        <shortName>RNase E</shortName>
        <shortName evidence="15">SynRne</shortName>
        <ecNumber evidence="17">3.1.26.12</ecNumber>
    </recommendedName>
    <alternativeName>
        <fullName evidence="14">Ribonuclease E/G</fullName>
    </alternativeName>
</protein>
<dbReference type="EC" id="3.1.26.12" evidence="17"/>
<dbReference type="EMBL" id="BA000022">
    <property type="protein sequence ID" value="BAA16658.1"/>
    <property type="molecule type" value="Genomic_DNA"/>
</dbReference>
<dbReference type="PIR" id="S74506">
    <property type="entry name" value="S74506"/>
</dbReference>
<dbReference type="SMR" id="P72656"/>
<dbReference type="IntAct" id="P72656">
    <property type="interactions" value="7"/>
</dbReference>
<dbReference type="STRING" id="1148.gene:10497513"/>
<dbReference type="PaxDb" id="1148-1651730"/>
<dbReference type="EnsemblBacteria" id="BAA16658">
    <property type="protein sequence ID" value="BAA16658"/>
    <property type="gene ID" value="BAA16658"/>
</dbReference>
<dbReference type="KEGG" id="syn:slr1129"/>
<dbReference type="eggNOG" id="COG1530">
    <property type="taxonomic scope" value="Bacteria"/>
</dbReference>
<dbReference type="InParanoid" id="P72656"/>
<dbReference type="PhylomeDB" id="P72656"/>
<dbReference type="BRENDA" id="3.1.26.12">
    <property type="organism ID" value="6192"/>
</dbReference>
<dbReference type="Proteomes" id="UP000001425">
    <property type="component" value="Chromosome"/>
</dbReference>
<dbReference type="GO" id="GO:0005737">
    <property type="term" value="C:cytoplasm"/>
    <property type="evidence" value="ECO:0000318"/>
    <property type="project" value="GO_Central"/>
</dbReference>
<dbReference type="GO" id="GO:0005886">
    <property type="term" value="C:plasma membrane"/>
    <property type="evidence" value="ECO:0007669"/>
    <property type="project" value="UniProtKB-SubCell"/>
</dbReference>
<dbReference type="GO" id="GO:0004519">
    <property type="term" value="F:endonuclease activity"/>
    <property type="evidence" value="ECO:0007669"/>
    <property type="project" value="UniProtKB-KW"/>
</dbReference>
<dbReference type="GO" id="GO:0046872">
    <property type="term" value="F:metal ion binding"/>
    <property type="evidence" value="ECO:0007669"/>
    <property type="project" value="UniProtKB-KW"/>
</dbReference>
<dbReference type="GO" id="GO:0004540">
    <property type="term" value="F:RNA nuclease activity"/>
    <property type="evidence" value="ECO:0000318"/>
    <property type="project" value="GO_Central"/>
</dbReference>
<dbReference type="GO" id="GO:0019843">
    <property type="term" value="F:rRNA binding"/>
    <property type="evidence" value="ECO:0007669"/>
    <property type="project" value="UniProtKB-KW"/>
</dbReference>
<dbReference type="GO" id="GO:0000049">
    <property type="term" value="F:tRNA binding"/>
    <property type="evidence" value="ECO:0007669"/>
    <property type="project" value="UniProtKB-KW"/>
</dbReference>
<dbReference type="GO" id="GO:0051607">
    <property type="term" value="P:defense response to virus"/>
    <property type="evidence" value="ECO:0007669"/>
    <property type="project" value="UniProtKB-KW"/>
</dbReference>
<dbReference type="GO" id="GO:0006364">
    <property type="term" value="P:rRNA processing"/>
    <property type="evidence" value="ECO:0000318"/>
    <property type="project" value="GO_Central"/>
</dbReference>
<dbReference type="GO" id="GO:0008033">
    <property type="term" value="P:tRNA processing"/>
    <property type="evidence" value="ECO:0007669"/>
    <property type="project" value="UniProtKB-KW"/>
</dbReference>
<dbReference type="CDD" id="cd04453">
    <property type="entry name" value="S1_RNase_E"/>
    <property type="match status" value="1"/>
</dbReference>
<dbReference type="Gene3D" id="2.40.50.140">
    <property type="entry name" value="Nucleic acid-binding proteins"/>
    <property type="match status" value="1"/>
</dbReference>
<dbReference type="InterPro" id="IPR012340">
    <property type="entry name" value="NA-bd_OB-fold"/>
</dbReference>
<dbReference type="InterPro" id="IPR019307">
    <property type="entry name" value="RNA-bd_AU-1/RNase_E/G"/>
</dbReference>
<dbReference type="InterPro" id="IPR004659">
    <property type="entry name" value="RNase_E/G"/>
</dbReference>
<dbReference type="InterPro" id="IPR003029">
    <property type="entry name" value="S1_domain"/>
</dbReference>
<dbReference type="NCBIfam" id="TIGR00757">
    <property type="entry name" value="RNaseEG"/>
    <property type="match status" value="1"/>
</dbReference>
<dbReference type="PANTHER" id="PTHR30001">
    <property type="entry name" value="RIBONUCLEASE"/>
    <property type="match status" value="1"/>
</dbReference>
<dbReference type="PANTHER" id="PTHR30001:SF0">
    <property type="entry name" value="RIBONUCLEASE G"/>
    <property type="match status" value="1"/>
</dbReference>
<dbReference type="Pfam" id="PF10150">
    <property type="entry name" value="RNase_E_G"/>
    <property type="match status" value="1"/>
</dbReference>
<dbReference type="SMART" id="SM00316">
    <property type="entry name" value="S1"/>
    <property type="match status" value="1"/>
</dbReference>
<dbReference type="SUPFAM" id="SSF50249">
    <property type="entry name" value="Nucleic acid-binding proteins"/>
    <property type="match status" value="1"/>
</dbReference>
<dbReference type="PROSITE" id="PS50126">
    <property type="entry name" value="S1"/>
    <property type="match status" value="1"/>
</dbReference>
<proteinExistence type="evidence at protein level"/>
<organism>
    <name type="scientific">Synechocystis sp. (strain ATCC 27184 / PCC 6803 / Kazusa)</name>
    <dbReference type="NCBI Taxonomy" id="1111708"/>
    <lineage>
        <taxon>Bacteria</taxon>
        <taxon>Bacillati</taxon>
        <taxon>Cyanobacteriota</taxon>
        <taxon>Cyanophyceae</taxon>
        <taxon>Synechococcales</taxon>
        <taxon>Merismopediaceae</taxon>
        <taxon>Synechocystis</taxon>
    </lineage>
</organism>
<feature type="chain" id="PRO_0000097378" description="Ribonuclease E">
    <location>
        <begin position="1"/>
        <end position="674"/>
    </location>
</feature>
<feature type="domain" description="S1 motif" evidence="2">
    <location>
        <begin position="35"/>
        <end position="117"/>
    </location>
</feature>
<feature type="region of interest" description="Disordered" evidence="3">
    <location>
        <begin position="458"/>
        <end position="529"/>
    </location>
</feature>
<feature type="region of interest" description="Disordered" evidence="3">
    <location>
        <begin position="626"/>
        <end position="674"/>
    </location>
</feature>
<feature type="short sequence motif" description="C4 Arg-rich motif, probably responsible for interaction with PNPase" evidence="8">
    <location>
        <begin position="665"/>
        <end position="673"/>
    </location>
</feature>
<feature type="compositionally biased region" description="Basic and acidic residues" evidence="3">
    <location>
        <begin position="484"/>
        <end position="493"/>
    </location>
</feature>
<feature type="compositionally biased region" description="Basic and acidic residues" evidence="3">
    <location>
        <begin position="509"/>
        <end position="529"/>
    </location>
</feature>
<feature type="compositionally biased region" description="Basic residues" evidence="3">
    <location>
        <begin position="663"/>
        <end position="674"/>
    </location>
</feature>
<feature type="binding site" evidence="1">
    <location>
        <position position="296"/>
    </location>
    <ligand>
        <name>Mg(2+)</name>
        <dbReference type="ChEBI" id="CHEBI:18420"/>
        <note>catalytic</note>
    </ligand>
</feature>
<feature type="binding site" evidence="1">
    <location>
        <position position="339"/>
    </location>
    <ligand>
        <name>Mg(2+)</name>
        <dbReference type="ChEBI" id="CHEBI:18420"/>
        <note>catalytic</note>
    </ligand>
</feature>
<feature type="binding site" evidence="1">
    <location>
        <position position="397"/>
    </location>
    <ligand>
        <name>Zn(2+)</name>
        <dbReference type="ChEBI" id="CHEBI:29105"/>
        <note>ligand shared between dimeric partners</note>
    </ligand>
</feature>
<feature type="binding site" evidence="1">
    <location>
        <position position="400"/>
    </location>
    <ligand>
        <name>Zn(2+)</name>
        <dbReference type="ChEBI" id="CHEBI:29105"/>
        <note>ligand shared between dimeric partners</note>
    </ligand>
</feature>
<feature type="mutagenesis site" description="Considerable decrease in CRISPR3 crRNA precursor and psbA2 processing; when associated with A-98." evidence="11">
    <original>F</original>
    <variation>A</variation>
    <location>
        <position position="64"/>
    </location>
</feature>
<feature type="mutagenesis site" description="Considerable decrease in CRISPR3 crRNA precursor and psbA2 processing; when associated with A-64." evidence="11">
    <original>K</original>
    <variation>A</variation>
    <location>
        <position position="98"/>
    </location>
</feature>
<sequence>MPKQIVIAEKHQVAAVFWKDQIQELVVSTGSQQVGDIYLGLVDNILPSIDAAFINIGDTEKNGFIHVSDLGPVRLRRTAGSISELLSPQQRVLVQVMKEPTGNKGPRLTGNISMPGRYMVLMPYGRGVNLSRRINREEERSRLRALAVLIKPPGMGLLVRTEAEDVPEDAIIEDLENLQKQWELVQQQAMTRSAPMLLDRDDDFIKRVLRDMYSSEVNRIVVDTPAGMKRIKQQLMNWDQGRLPEGVLIDCHRESLSILEYFRVNATIREALKPRVDLPSGGYIIIEPTEALTVIDVNSGSFTHSANSRETVLWTNYEAATEIARQLKLRNIGGVIIIDFIDMDSHKDQLQLLEHFNRCLETDKARPQIAQLTELGLVELTRKRQGQNLYELFGQPCPECGGLGHLVELPGEKGFVSLSPTAVNSSIPPRLVEKPILSPPVAKVNDLPKKEEAKISSPLDLLFHPNYQEQGDRDSNRRRRRRRGSEFSEKENIKSVGISRSKGPSPSPTKEKVTGTAPPRRERPSRRVEKTLVPVDVAMTTLEQDIYARMGISPLIKTEYADQDPRSFMVSVVTAGAALEGNTNGSGSLVNAVITTVDNGDNGDNVPSDGLTIVSEVTAPTPVIEQPREETVEPEQVVLPQLDDETPAAPVAEESAPIETKKRPGRRRRRSSAE</sequence>
<gene>
    <name evidence="15" type="primary">rne</name>
    <name type="ordered locus">slr1129</name>
</gene>
<name>RNE_SYNY3</name>
<comment type="function">
    <text evidence="4 6 9 12 13">Endoribonuclease that plays a central role in rRNA processing and mRNA decay, and probably tRNA processing (PubMed:17661085, PubMed:25248550, PubMed:32209657, PubMed:9751718). Acts on 9S rRNA (the precursor of 5S rRNA) and RNAI, a molecule that controls the replication of ColE1 plasmid. Upon expression in E.coli does not purify with endogenous degradosome proteins (PubMed:9751718). Prefers 5'-monophosphorylated substrates over 5'-triphosphorylated substrates. Complements an rne temperature-sensitive mutation in E.coli, despite being considerably shorter and not able to interact with the E.coli degradosome (PubMed:10762247). Cleaves AU-rich sequences in vitro, tested with psbA2 mRNA. Complements both an rne temperature-sensitive mutation and an rng deletion in E.coli (PubMed:17661085). Acts in the degradation of psaL mRNA in the presence but not the absence of the sRNA PsrR1 (PubMed:25248550). Cleaves the rimO-crhR transcript, contributing to the very short half-life of rimO mRNA (PubMed:32209657).</text>
</comment>
<comment type="function">
    <text evidence="6">mRNA for psbA2, one of the core proteins in photosystem II, is degraded in the dark under control of a cis-acting AU-rich box in its 5'-UTR. RNase E cuts in this box, suggesting it is involved in this dark-induced mRNA instability.</text>
</comment>
<comment type="function">
    <text evidence="11">CRISPR (clustered regularly interspaced short palindromic repeat) is an adaptive immune system that provides protection against mobile genetic elements (viruses, transposable elements and conjugative plasmids). CRISPR clusters contain spacers, sequences complementary to antecedent mobile elements, and target invading nucleic acids. CRISPR clusters are transcribed and processed into CRISPR RNA (crRNA). Endogenous RNase E is required for correct processing of pre-crRNA for the CRISPR3 subtype III-B system in this genome (genes sll7080 to sll7095). This CRISPR3 system does not include a cas6 gene, which is the usual RNase involved in crRNA maturation.</text>
</comment>
<comment type="catalytic activity">
    <reaction evidence="17 20">
        <text>Endonucleolytic cleavage of single-stranded RNA in A- and U-rich regions.</text>
        <dbReference type="EC" id="3.1.26.12"/>
    </reaction>
</comment>
<comment type="cofactor">
    <cofactor evidence="1">
        <name>Mg(2+)</name>
        <dbReference type="ChEBI" id="CHEBI:18420"/>
    </cofactor>
    <text evidence="1">Binds 1 Mg(2+) ion per subunit.</text>
</comment>
<comment type="subunit">
    <text evidence="5 8">Fractionates in a 250-300 kDa region, which is too small to be the equivalent of an RNA degradosome, as occurs with E.coli RNase E (PubMed:12601000). Interacts with polynucleotide phosphorylase (PNPase, pnp), probably via the C4 Arg-rich motif (residues 665-673) (PubMed:24563514).</text>
</comment>
<comment type="subcellular location">
    <subcellularLocation>
        <location evidence="18 19">Cytoplasm</location>
    </subcellularLocation>
    <subcellularLocation>
        <location evidence="18">Cell inner membrane</location>
        <topology evidence="1">Peripheral membrane protein</topology>
        <orientation evidence="1">Cytoplasmic side</orientation>
    </subcellularLocation>
    <text evidence="7 10">Subcellular locations are shown upon expression in E.coli of the N-terminal domain (residues 1-396) (PubMed:22509045). Some of the protein cosediments with polysomes (PubMed:27215789).</text>
</comment>
<comment type="disruption phenotype">
    <text evidence="5 6 11">Essential, it cannot be deleted (PubMed:12601000, PubMed:17661085, PubMed:29403013). Knockdown experiments show decreased amounts of crRNA precursor processing (PubMed:29403013).</text>
</comment>
<comment type="similarity">
    <text evidence="16">Belongs to the RNase E/G family.</text>
</comment>
<reference key="1">
    <citation type="journal article" date="1996" name="DNA Res.">
        <title>Sequence analysis of the genome of the unicellular cyanobacterium Synechocystis sp. strain PCC6803. II. Sequence determination of the entire genome and assignment of potential protein-coding regions.</title>
        <authorList>
            <person name="Kaneko T."/>
            <person name="Sato S."/>
            <person name="Kotani H."/>
            <person name="Tanaka A."/>
            <person name="Asamizu E."/>
            <person name="Nakamura Y."/>
            <person name="Miyajima N."/>
            <person name="Hirosawa M."/>
            <person name="Sugiura M."/>
            <person name="Sasamoto S."/>
            <person name="Kimura T."/>
            <person name="Hosouchi T."/>
            <person name="Matsuno A."/>
            <person name="Muraki A."/>
            <person name="Nakazaki N."/>
            <person name="Naruo K."/>
            <person name="Okumura S."/>
            <person name="Shimpo S."/>
            <person name="Takeuchi C."/>
            <person name="Wada T."/>
            <person name="Watanabe A."/>
            <person name="Yamada M."/>
            <person name="Yasuda M."/>
            <person name="Tabata S."/>
        </authorList>
    </citation>
    <scope>NUCLEOTIDE SEQUENCE [LARGE SCALE GENOMIC DNA]</scope>
    <source>
        <strain>ATCC 27184 / PCC 6803 / Kazusa</strain>
    </source>
</reference>
<reference key="2">
    <citation type="journal article" date="1998" name="Proc. Natl. Acad. Sci. U.S.A.">
        <title>The endoribonucleolytic N-terminal half of Escherichia coli RNase E is evolutionarily conserved in Synechocystis sp. and other bacteria but not the C-terminal half, which is sufficient for degradosome assembly.</title>
        <authorList>
            <person name="Kaberdin V.R."/>
            <person name="Miczak A."/>
            <person name="Jakobsen J.S."/>
            <person name="Lin-Chao S."/>
            <person name="McDowall K.J."/>
            <person name="von Gabain A."/>
        </authorList>
    </citation>
    <scope>FUNCTION AS AN ENDONUCLEASE</scope>
    <scope>FUNCTION IN 5S RRNA MATURATION</scope>
    <scope>RRNA-BINDING</scope>
    <scope>EXPRESSION IN E.COLI</scope>
    <source>
        <strain>ATCC 27184 / PCC 6803 / Kazusa</strain>
    </source>
</reference>
<reference key="3">
    <citation type="journal article" date="2000" name="J. Bacteriol.">
        <title>Regions of RNase E important for 5'-end-dependent RNA cleavage and autoregulated synthesis.</title>
        <authorList>
            <person name="Jiang X."/>
            <person name="Diwa A."/>
            <person name="Belasco J.G."/>
        </authorList>
    </citation>
    <scope>FUNCTION</scope>
    <scope>SUBSTRATE SPECIFICITY</scope>
    <scope>EXPRESSION IN E.COLI</scope>
    <source>
        <strain>ATCC 27184 / PCC 6803 / Kazusa</strain>
    </source>
</reference>
<reference key="4">
    <citation type="journal article" date="2003" name="J. Biol. Chem.">
        <title>RNA polyadenylation and degradation in cyanobacteria are similar to the chloroplast but different from Escherichia coli.</title>
        <authorList>
            <person name="Rott R."/>
            <person name="Zipor G."/>
            <person name="Portnoy V."/>
            <person name="Liveanu V."/>
            <person name="Schuster G."/>
        </authorList>
    </citation>
    <scope>SUBUNIT</scope>
    <scope>DISRUPTION PHENOTYPE</scope>
    <source>
        <strain>ATCC 27184 / PCC 6803 / Kazusa</strain>
    </source>
</reference>
<reference key="5">
    <citation type="journal article" date="2007" name="Mol. Genet. Genomics">
        <title>Dark-induced mRNA instability involves RNase E/G-type endoribonuclease cleavage at the AU-box and SD sequences in cyanobacteria.</title>
        <authorList>
            <person name="Horie Y."/>
            <person name="Ito Y."/>
            <person name="Ono M."/>
            <person name="Moriwaki N."/>
            <person name="Kato H."/>
            <person name="Hamakubo Y."/>
            <person name="Amano T."/>
            <person name="Wachi M."/>
            <person name="Shirai M."/>
            <person name="Asayama M."/>
        </authorList>
    </citation>
    <scope>FUNCTION</scope>
    <scope>CATALYTIC ACTIVITY</scope>
    <scope>DISRUPTION PHENOTYPE</scope>
    <source>
        <strain>ATCC 27184 / PCC 6803 / Kazusa</strain>
    </source>
</reference>
<reference key="6">
    <citation type="journal article" date="2012" name="Proc. Natl. Acad. Sci. U.S.A.">
        <title>Membrane binding of Escherichia coli RNase E catalytic domain stabilizes protein structure and increases RNA substrate affinity.</title>
        <authorList>
            <person name="Murashko O.N."/>
            <person name="Kaberdin V.R."/>
            <person name="Lin-Chao S."/>
        </authorList>
    </citation>
    <scope>SUBCELLULAR LOCATION</scope>
    <scope>EXPRESSION IN E.COLI</scope>
</reference>
<reference key="7">
    <citation type="journal article" date="2014" name="Plant Cell">
        <title>The small regulatory RNA SyR1/PsrR1 controls photosynthetic functions in cyanobacteria.</title>
        <authorList>
            <person name="Georg J."/>
            <person name="Dienst D."/>
            <person name="Schuergers N."/>
            <person name="Wallner T."/>
            <person name="Kopp D."/>
            <person name="Stazic D."/>
            <person name="Kuchmina E."/>
            <person name="Klaehn S."/>
            <person name="Lokstein H."/>
            <person name="Hess W.R."/>
            <person name="Wilde A."/>
        </authorList>
    </citation>
    <scope>FUNCTION</scope>
    <source>
        <strain>ATCC 27184 / PCC 6803 / Kazusa</strain>
    </source>
</reference>
<reference key="8">
    <citation type="journal article" date="2014" name="RNA">
        <title>RNase E forms a complex with polynucleotide phosphorylase in cyanobacteria via a cyanobacterial-specific nonapeptide in the noncatalytic region.</title>
        <authorList>
            <person name="Zhang J.Y."/>
            <person name="Deng X.M."/>
            <person name="Li F.P."/>
            <person name="Wang L."/>
            <person name="Huang Q.Y."/>
            <person name="Zhang C.C."/>
            <person name="Chen W.L."/>
        </authorList>
    </citation>
    <scope>SUBUNIT</scope>
    <scope>DOMAIN</scope>
    <source>
        <strain>ATCC 27184 / PCC 6803 / Kazusa</strain>
    </source>
</reference>
<reference key="9">
    <citation type="journal article" date="2016" name="J. Bacteriol.">
        <title>Cyanobacterial RNA Helicase CrhR Localizes to the Thylakoid Membrane Region and Cosediments with Degradosome and Polysome Complexes in Synechocystis sp. Strain PCC 6803.</title>
        <authorList>
            <person name="Rosana A.R."/>
            <person name="Whitford D.S."/>
            <person name="Fahlman R.P."/>
            <person name="Owttrim G.W."/>
        </authorList>
    </citation>
    <scope>SUBCELLULAR LOCATION</scope>
    <source>
        <strain>ATCC 27184 / PCC 6803 / Kazusa</strain>
    </source>
</reference>
<reference key="10">
    <citation type="journal article" date="2018" name="Nat. Microbiol.">
        <title>The host-encoded RNase E endonuclease as the crRNA maturation enzyme in a CRISPR-Cas subtype III-Bv system.</title>
        <authorList>
            <person name="Behler J."/>
            <person name="Sharma K."/>
            <person name="Reimann V."/>
            <person name="Wilde A."/>
            <person name="Urlaub H."/>
            <person name="Hess W.R."/>
        </authorList>
    </citation>
    <scope>FUNCTION IN CRRNA MATURATION</scope>
    <scope>DISRUPTION PHENOTYPE</scope>
    <scope>MUTAGENESIS OF PHE-64 AND LYS-98</scope>
    <scope>RNA-BINDING</scope>
    <source>
        <strain>ATCC 27184 / PCC 6803 / Kazusa</strain>
    </source>
</reference>
<reference key="11">
    <citation type="journal article" date="2020" name="J. Biol. Chem.">
        <title>RNA helicase-regulated processing of the Synechocystis rimO-crhR operon results in differential cistron expression and accumulation of two sRNAs.</title>
        <authorList>
            <person name="Rosana A.R.R."/>
            <person name="Whitford D.S."/>
            <person name="Migur A."/>
            <person name="Steglich C."/>
            <person name="Kujat-Choy S.L."/>
            <person name="Hess W.R."/>
            <person name="Owttrim G.W."/>
        </authorList>
    </citation>
    <scope>FUNCTION</scope>
    <source>
        <strain>ATCC 27184 / PCC 6803 / Kazusa</strain>
    </source>
</reference>
<keyword id="KW-0051">Antiviral defense</keyword>
<keyword id="KW-0997">Cell inner membrane</keyword>
<keyword id="KW-1003">Cell membrane</keyword>
<keyword id="KW-0963">Cytoplasm</keyword>
<keyword id="KW-0255">Endonuclease</keyword>
<keyword id="KW-0378">Hydrolase</keyword>
<keyword id="KW-0460">Magnesium</keyword>
<keyword id="KW-0472">Membrane</keyword>
<keyword id="KW-0479">Metal-binding</keyword>
<keyword id="KW-0540">Nuclease</keyword>
<keyword id="KW-1185">Reference proteome</keyword>
<keyword id="KW-0694">RNA-binding</keyword>
<keyword id="KW-0698">rRNA processing</keyword>
<keyword id="KW-0699">rRNA-binding</keyword>
<keyword id="KW-0819">tRNA processing</keyword>
<keyword id="KW-0820">tRNA-binding</keyword>
<keyword id="KW-0862">Zinc</keyword>